<comment type="function">
    <text evidence="1">Catalyzes the radical-mediated insertion of two sulfur atoms into the C-6 and C-8 positions of the octanoyl moiety bound to the lipoyl domains of lipoate-dependent enzymes, thereby converting the octanoylated domains into lipoylated derivatives.</text>
</comment>
<comment type="catalytic activity">
    <reaction evidence="1">
        <text>[[Fe-S] cluster scaffold protein carrying a second [4Fe-4S](2+) cluster] + N(6)-octanoyl-L-lysyl-[protein] + 2 oxidized [2Fe-2S]-[ferredoxin] + 2 S-adenosyl-L-methionine + 4 H(+) = [[Fe-S] cluster scaffold protein] + N(6)-[(R)-dihydrolipoyl]-L-lysyl-[protein] + 4 Fe(3+) + 2 hydrogen sulfide + 2 5'-deoxyadenosine + 2 L-methionine + 2 reduced [2Fe-2S]-[ferredoxin]</text>
        <dbReference type="Rhea" id="RHEA:16585"/>
        <dbReference type="Rhea" id="RHEA-COMP:9928"/>
        <dbReference type="Rhea" id="RHEA-COMP:10000"/>
        <dbReference type="Rhea" id="RHEA-COMP:10001"/>
        <dbReference type="Rhea" id="RHEA-COMP:10475"/>
        <dbReference type="Rhea" id="RHEA-COMP:14568"/>
        <dbReference type="Rhea" id="RHEA-COMP:14569"/>
        <dbReference type="ChEBI" id="CHEBI:15378"/>
        <dbReference type="ChEBI" id="CHEBI:17319"/>
        <dbReference type="ChEBI" id="CHEBI:29034"/>
        <dbReference type="ChEBI" id="CHEBI:29919"/>
        <dbReference type="ChEBI" id="CHEBI:33722"/>
        <dbReference type="ChEBI" id="CHEBI:33737"/>
        <dbReference type="ChEBI" id="CHEBI:33738"/>
        <dbReference type="ChEBI" id="CHEBI:57844"/>
        <dbReference type="ChEBI" id="CHEBI:59789"/>
        <dbReference type="ChEBI" id="CHEBI:78809"/>
        <dbReference type="ChEBI" id="CHEBI:83100"/>
        <dbReference type="EC" id="2.8.1.8"/>
    </reaction>
</comment>
<comment type="cofactor">
    <cofactor evidence="1">
        <name>[4Fe-4S] cluster</name>
        <dbReference type="ChEBI" id="CHEBI:49883"/>
    </cofactor>
    <text evidence="1">Binds 2 [4Fe-4S] clusters per subunit. One cluster is coordinated with 3 cysteines and an exchangeable S-adenosyl-L-methionine.</text>
</comment>
<comment type="pathway">
    <text evidence="1">Protein modification; protein lipoylation via endogenous pathway; protein N(6)-(lipoyl)lysine from octanoyl-[acyl-carrier-protein]: step 2/2.</text>
</comment>
<comment type="subcellular location">
    <subcellularLocation>
        <location evidence="1">Cytoplasm</location>
    </subcellularLocation>
</comment>
<comment type="similarity">
    <text evidence="1">Belongs to the radical SAM superfamily. Lipoyl synthase family.</text>
</comment>
<dbReference type="EC" id="2.8.1.8" evidence="1"/>
<dbReference type="EMBL" id="BX572601">
    <property type="protein sequence ID" value="CAE28028.1"/>
    <property type="molecule type" value="Genomic_DNA"/>
</dbReference>
<dbReference type="RefSeq" id="WP_011158137.1">
    <property type="nucleotide sequence ID" value="NZ_CP116810.1"/>
</dbReference>
<dbReference type="SMR" id="P61198"/>
<dbReference type="STRING" id="258594.RPA2587"/>
<dbReference type="GeneID" id="66893656"/>
<dbReference type="eggNOG" id="COG0320">
    <property type="taxonomic scope" value="Bacteria"/>
</dbReference>
<dbReference type="HOGENOM" id="CLU_033144_2_1_5"/>
<dbReference type="PhylomeDB" id="P61198"/>
<dbReference type="UniPathway" id="UPA00538">
    <property type="reaction ID" value="UER00593"/>
</dbReference>
<dbReference type="GO" id="GO:0005737">
    <property type="term" value="C:cytoplasm"/>
    <property type="evidence" value="ECO:0007669"/>
    <property type="project" value="UniProtKB-SubCell"/>
</dbReference>
<dbReference type="GO" id="GO:0051539">
    <property type="term" value="F:4 iron, 4 sulfur cluster binding"/>
    <property type="evidence" value="ECO:0007669"/>
    <property type="project" value="UniProtKB-UniRule"/>
</dbReference>
<dbReference type="GO" id="GO:0016992">
    <property type="term" value="F:lipoate synthase activity"/>
    <property type="evidence" value="ECO:0007669"/>
    <property type="project" value="UniProtKB-UniRule"/>
</dbReference>
<dbReference type="GO" id="GO:0046872">
    <property type="term" value="F:metal ion binding"/>
    <property type="evidence" value="ECO:0007669"/>
    <property type="project" value="UniProtKB-KW"/>
</dbReference>
<dbReference type="CDD" id="cd01335">
    <property type="entry name" value="Radical_SAM"/>
    <property type="match status" value="1"/>
</dbReference>
<dbReference type="FunFam" id="3.20.20.70:FF:000040">
    <property type="entry name" value="Lipoyl synthase"/>
    <property type="match status" value="1"/>
</dbReference>
<dbReference type="Gene3D" id="3.20.20.70">
    <property type="entry name" value="Aldolase class I"/>
    <property type="match status" value="1"/>
</dbReference>
<dbReference type="HAMAP" id="MF_00206">
    <property type="entry name" value="Lipoyl_synth"/>
    <property type="match status" value="1"/>
</dbReference>
<dbReference type="InterPro" id="IPR013785">
    <property type="entry name" value="Aldolase_TIM"/>
</dbReference>
<dbReference type="InterPro" id="IPR006638">
    <property type="entry name" value="Elp3/MiaA/NifB-like_rSAM"/>
</dbReference>
<dbReference type="InterPro" id="IPR003698">
    <property type="entry name" value="Lipoyl_synth"/>
</dbReference>
<dbReference type="InterPro" id="IPR007197">
    <property type="entry name" value="rSAM"/>
</dbReference>
<dbReference type="NCBIfam" id="TIGR00510">
    <property type="entry name" value="lipA"/>
    <property type="match status" value="1"/>
</dbReference>
<dbReference type="NCBIfam" id="NF004019">
    <property type="entry name" value="PRK05481.1"/>
    <property type="match status" value="1"/>
</dbReference>
<dbReference type="NCBIfam" id="NF009544">
    <property type="entry name" value="PRK12928.1"/>
    <property type="match status" value="1"/>
</dbReference>
<dbReference type="PANTHER" id="PTHR10949">
    <property type="entry name" value="LIPOYL SYNTHASE"/>
    <property type="match status" value="1"/>
</dbReference>
<dbReference type="PANTHER" id="PTHR10949:SF0">
    <property type="entry name" value="LIPOYL SYNTHASE, MITOCHONDRIAL"/>
    <property type="match status" value="1"/>
</dbReference>
<dbReference type="Pfam" id="PF04055">
    <property type="entry name" value="Radical_SAM"/>
    <property type="match status" value="1"/>
</dbReference>
<dbReference type="PIRSF" id="PIRSF005963">
    <property type="entry name" value="Lipoyl_synth"/>
    <property type="match status" value="1"/>
</dbReference>
<dbReference type="SFLD" id="SFLDF00271">
    <property type="entry name" value="lipoyl_synthase"/>
    <property type="match status" value="1"/>
</dbReference>
<dbReference type="SFLD" id="SFLDG01058">
    <property type="entry name" value="lipoyl_synthase_like"/>
    <property type="match status" value="1"/>
</dbReference>
<dbReference type="SMART" id="SM00729">
    <property type="entry name" value="Elp3"/>
    <property type="match status" value="1"/>
</dbReference>
<dbReference type="SUPFAM" id="SSF102114">
    <property type="entry name" value="Radical SAM enzymes"/>
    <property type="match status" value="1"/>
</dbReference>
<dbReference type="PROSITE" id="PS51918">
    <property type="entry name" value="RADICAL_SAM"/>
    <property type="match status" value="1"/>
</dbReference>
<proteinExistence type="inferred from homology"/>
<evidence type="ECO:0000255" key="1">
    <source>
        <dbReference type="HAMAP-Rule" id="MF_00206"/>
    </source>
</evidence>
<evidence type="ECO:0000255" key="2">
    <source>
        <dbReference type="PROSITE-ProRule" id="PRU01266"/>
    </source>
</evidence>
<evidence type="ECO:0000256" key="3">
    <source>
        <dbReference type="SAM" id="MobiDB-lite"/>
    </source>
</evidence>
<protein>
    <recommendedName>
        <fullName evidence="1">Lipoyl synthase</fullName>
        <ecNumber evidence="1">2.8.1.8</ecNumber>
    </recommendedName>
    <alternativeName>
        <fullName evidence="1">Lip-syn</fullName>
        <shortName evidence="1">LS</shortName>
    </alternativeName>
    <alternativeName>
        <fullName evidence="1">Lipoate synthase</fullName>
    </alternativeName>
    <alternativeName>
        <fullName evidence="1">Lipoic acid synthase</fullName>
    </alternativeName>
    <alternativeName>
        <fullName evidence="1">Sulfur insertion protein LipA</fullName>
    </alternativeName>
</protein>
<organism>
    <name type="scientific">Rhodopseudomonas palustris (strain ATCC BAA-98 / CGA009)</name>
    <dbReference type="NCBI Taxonomy" id="258594"/>
    <lineage>
        <taxon>Bacteria</taxon>
        <taxon>Pseudomonadati</taxon>
        <taxon>Pseudomonadota</taxon>
        <taxon>Alphaproteobacteria</taxon>
        <taxon>Hyphomicrobiales</taxon>
        <taxon>Nitrobacteraceae</taxon>
        <taxon>Rhodopseudomonas</taxon>
    </lineage>
</organism>
<keyword id="KW-0004">4Fe-4S</keyword>
<keyword id="KW-0963">Cytoplasm</keyword>
<keyword id="KW-0408">Iron</keyword>
<keyword id="KW-0411">Iron-sulfur</keyword>
<keyword id="KW-0479">Metal-binding</keyword>
<keyword id="KW-0949">S-adenosyl-L-methionine</keyword>
<keyword id="KW-0808">Transferase</keyword>
<sequence length="319" mass="35108">MVVLVDTVSANPVRPRHPEKAARPDALSPKKPDWIRVRAPTTRGYGETRGIVKENGLHTVCEEAGCPNIGECWDKKHATFMIMGDTCTRACAFCNVKTGMPGALDANEPAYVAEATRKLGLQHLVITSVDRDDLADGGAAHFAATIRAVREACPTTTIEILTPDFLRKDGALEVVVAAKPDVFNHNLETVPSRYLSVRPGARYFHSIRLLQRVKELDPSIFTKSGIMVGLGEERHEVLQVMDDLRSAEVDFLTIGQYLQPTRKHHAVMRYVTPDEFAGYQTTAYAKGFLMVSASPMTRSSHHAGDDFAKLKAARAARAR</sequence>
<feature type="chain" id="PRO_0000102350" description="Lipoyl synthase">
    <location>
        <begin position="1"/>
        <end position="319"/>
    </location>
</feature>
<feature type="domain" description="Radical SAM core" evidence="2">
    <location>
        <begin position="73"/>
        <end position="289"/>
    </location>
</feature>
<feature type="region of interest" description="Disordered" evidence="3">
    <location>
        <begin position="6"/>
        <end position="29"/>
    </location>
</feature>
<feature type="compositionally biased region" description="Basic and acidic residues" evidence="3">
    <location>
        <begin position="16"/>
        <end position="29"/>
    </location>
</feature>
<feature type="binding site" evidence="1">
    <location>
        <position position="61"/>
    </location>
    <ligand>
        <name>[4Fe-4S] cluster</name>
        <dbReference type="ChEBI" id="CHEBI:49883"/>
        <label>1</label>
    </ligand>
</feature>
<feature type="binding site" evidence="1">
    <location>
        <position position="66"/>
    </location>
    <ligand>
        <name>[4Fe-4S] cluster</name>
        <dbReference type="ChEBI" id="CHEBI:49883"/>
        <label>1</label>
    </ligand>
</feature>
<feature type="binding site" evidence="1">
    <location>
        <position position="72"/>
    </location>
    <ligand>
        <name>[4Fe-4S] cluster</name>
        <dbReference type="ChEBI" id="CHEBI:49883"/>
        <label>1</label>
    </ligand>
</feature>
<feature type="binding site" evidence="1">
    <location>
        <position position="87"/>
    </location>
    <ligand>
        <name>[4Fe-4S] cluster</name>
        <dbReference type="ChEBI" id="CHEBI:49883"/>
        <label>2</label>
        <note>4Fe-4S-S-AdoMet</note>
    </ligand>
</feature>
<feature type="binding site" evidence="1">
    <location>
        <position position="91"/>
    </location>
    <ligand>
        <name>[4Fe-4S] cluster</name>
        <dbReference type="ChEBI" id="CHEBI:49883"/>
        <label>2</label>
        <note>4Fe-4S-S-AdoMet</note>
    </ligand>
</feature>
<feature type="binding site" evidence="1">
    <location>
        <position position="94"/>
    </location>
    <ligand>
        <name>[4Fe-4S] cluster</name>
        <dbReference type="ChEBI" id="CHEBI:49883"/>
        <label>2</label>
        <note>4Fe-4S-S-AdoMet</note>
    </ligand>
</feature>
<feature type="binding site" evidence="1">
    <location>
        <position position="300"/>
    </location>
    <ligand>
        <name>[4Fe-4S] cluster</name>
        <dbReference type="ChEBI" id="CHEBI:49883"/>
        <label>1</label>
    </ligand>
</feature>
<name>LIPA_RHOPA</name>
<reference key="1">
    <citation type="journal article" date="2004" name="Nat. Biotechnol.">
        <title>Complete genome sequence of the metabolically versatile photosynthetic bacterium Rhodopseudomonas palustris.</title>
        <authorList>
            <person name="Larimer F.W."/>
            <person name="Chain P."/>
            <person name="Hauser L."/>
            <person name="Lamerdin J.E."/>
            <person name="Malfatti S."/>
            <person name="Do L."/>
            <person name="Land M.L."/>
            <person name="Pelletier D.A."/>
            <person name="Beatty J.T."/>
            <person name="Lang A.S."/>
            <person name="Tabita F.R."/>
            <person name="Gibson J.L."/>
            <person name="Hanson T.E."/>
            <person name="Bobst C."/>
            <person name="Torres y Torres J.L."/>
            <person name="Peres C."/>
            <person name="Harrison F.H."/>
            <person name="Gibson J."/>
            <person name="Harwood C.S."/>
        </authorList>
    </citation>
    <scope>NUCLEOTIDE SEQUENCE [LARGE SCALE GENOMIC DNA]</scope>
    <source>
        <strain>ATCC BAA-98 / CGA009</strain>
    </source>
</reference>
<gene>
    <name evidence="1" type="primary">lipA</name>
    <name type="ordered locus">RPA2587</name>
</gene>
<accession>P61198</accession>